<comment type="function">
    <text evidence="1">Catalyzes the attachment of L-aspartate to tRNA(Asp) in a two-step reaction: L-aspartate is first activated by ATP to form Asp-AMP and then transferred to the acceptor end of tRNA(Asp).</text>
</comment>
<comment type="catalytic activity">
    <reaction evidence="1">
        <text>tRNA(Asp) + L-aspartate + ATP = L-aspartyl-tRNA(Asp) + AMP + diphosphate</text>
        <dbReference type="Rhea" id="RHEA:19649"/>
        <dbReference type="Rhea" id="RHEA-COMP:9660"/>
        <dbReference type="Rhea" id="RHEA-COMP:9678"/>
        <dbReference type="ChEBI" id="CHEBI:29991"/>
        <dbReference type="ChEBI" id="CHEBI:30616"/>
        <dbReference type="ChEBI" id="CHEBI:33019"/>
        <dbReference type="ChEBI" id="CHEBI:78442"/>
        <dbReference type="ChEBI" id="CHEBI:78516"/>
        <dbReference type="ChEBI" id="CHEBI:456215"/>
        <dbReference type="EC" id="6.1.1.12"/>
    </reaction>
</comment>
<comment type="subunit">
    <text evidence="1">Homodimer.</text>
</comment>
<comment type="subcellular location">
    <subcellularLocation>
        <location evidence="1">Cytoplasm</location>
    </subcellularLocation>
</comment>
<comment type="similarity">
    <text evidence="1">Belongs to the class-II aminoacyl-tRNA synthetase family. Type 1 subfamily.</text>
</comment>
<proteinExistence type="inferred from homology"/>
<feature type="chain" id="PRO_0000110946" description="Aspartate--tRNA ligase">
    <location>
        <begin position="1"/>
        <end position="588"/>
    </location>
</feature>
<feature type="region of interest" description="Aspartate" evidence="1">
    <location>
        <begin position="201"/>
        <end position="204"/>
    </location>
</feature>
<feature type="binding site" evidence="1">
    <location>
        <position position="177"/>
    </location>
    <ligand>
        <name>L-aspartate</name>
        <dbReference type="ChEBI" id="CHEBI:29991"/>
    </ligand>
</feature>
<feature type="binding site" evidence="1">
    <location>
        <begin position="223"/>
        <end position="225"/>
    </location>
    <ligand>
        <name>ATP</name>
        <dbReference type="ChEBI" id="CHEBI:30616"/>
    </ligand>
</feature>
<feature type="binding site" evidence="1">
    <location>
        <position position="223"/>
    </location>
    <ligand>
        <name>L-aspartate</name>
        <dbReference type="ChEBI" id="CHEBI:29991"/>
    </ligand>
</feature>
<feature type="binding site" evidence="1">
    <location>
        <position position="232"/>
    </location>
    <ligand>
        <name>ATP</name>
        <dbReference type="ChEBI" id="CHEBI:30616"/>
    </ligand>
</feature>
<feature type="binding site" evidence="1">
    <location>
        <position position="451"/>
    </location>
    <ligand>
        <name>L-aspartate</name>
        <dbReference type="ChEBI" id="CHEBI:29991"/>
    </ligand>
</feature>
<feature type="binding site" evidence="1">
    <location>
        <position position="485"/>
    </location>
    <ligand>
        <name>ATP</name>
        <dbReference type="ChEBI" id="CHEBI:30616"/>
    </ligand>
</feature>
<feature type="binding site" evidence="1">
    <location>
        <position position="492"/>
    </location>
    <ligand>
        <name>L-aspartate</name>
        <dbReference type="ChEBI" id="CHEBI:29991"/>
    </ligand>
</feature>
<feature type="binding site" evidence="1">
    <location>
        <begin position="537"/>
        <end position="540"/>
    </location>
    <ligand>
        <name>ATP</name>
        <dbReference type="ChEBI" id="CHEBI:30616"/>
    </ligand>
</feature>
<evidence type="ECO:0000255" key="1">
    <source>
        <dbReference type="HAMAP-Rule" id="MF_00044"/>
    </source>
</evidence>
<dbReference type="EC" id="6.1.1.12" evidence="1"/>
<dbReference type="EMBL" id="BA000033">
    <property type="protein sequence ID" value="BAB95445.1"/>
    <property type="molecule type" value="Genomic_DNA"/>
</dbReference>
<dbReference type="RefSeq" id="WP_000044799.1">
    <property type="nucleotide sequence ID" value="NC_003923.1"/>
</dbReference>
<dbReference type="SMR" id="P67016"/>
<dbReference type="KEGG" id="sam:MW1580"/>
<dbReference type="HOGENOM" id="CLU_014330_3_2_9"/>
<dbReference type="GO" id="GO:0005737">
    <property type="term" value="C:cytoplasm"/>
    <property type="evidence" value="ECO:0007669"/>
    <property type="project" value="UniProtKB-SubCell"/>
</dbReference>
<dbReference type="GO" id="GO:0004815">
    <property type="term" value="F:aspartate-tRNA ligase activity"/>
    <property type="evidence" value="ECO:0007669"/>
    <property type="project" value="UniProtKB-UniRule"/>
</dbReference>
<dbReference type="GO" id="GO:0005524">
    <property type="term" value="F:ATP binding"/>
    <property type="evidence" value="ECO:0007669"/>
    <property type="project" value="UniProtKB-UniRule"/>
</dbReference>
<dbReference type="GO" id="GO:0140096">
    <property type="term" value="F:catalytic activity, acting on a protein"/>
    <property type="evidence" value="ECO:0007669"/>
    <property type="project" value="UniProtKB-ARBA"/>
</dbReference>
<dbReference type="GO" id="GO:0003676">
    <property type="term" value="F:nucleic acid binding"/>
    <property type="evidence" value="ECO:0007669"/>
    <property type="project" value="InterPro"/>
</dbReference>
<dbReference type="GO" id="GO:0016740">
    <property type="term" value="F:transferase activity"/>
    <property type="evidence" value="ECO:0007669"/>
    <property type="project" value="UniProtKB-ARBA"/>
</dbReference>
<dbReference type="GO" id="GO:0006422">
    <property type="term" value="P:aspartyl-tRNA aminoacylation"/>
    <property type="evidence" value="ECO:0007669"/>
    <property type="project" value="UniProtKB-UniRule"/>
</dbReference>
<dbReference type="CDD" id="cd00777">
    <property type="entry name" value="AspRS_core"/>
    <property type="match status" value="1"/>
</dbReference>
<dbReference type="CDD" id="cd04317">
    <property type="entry name" value="EcAspRS_like_N"/>
    <property type="match status" value="1"/>
</dbReference>
<dbReference type="Gene3D" id="3.30.930.10">
    <property type="entry name" value="Bira Bifunctional Protein, Domain 2"/>
    <property type="match status" value="1"/>
</dbReference>
<dbReference type="Gene3D" id="3.30.1360.30">
    <property type="entry name" value="GAD-like domain"/>
    <property type="match status" value="1"/>
</dbReference>
<dbReference type="Gene3D" id="2.40.50.140">
    <property type="entry name" value="Nucleic acid-binding proteins"/>
    <property type="match status" value="1"/>
</dbReference>
<dbReference type="HAMAP" id="MF_00044">
    <property type="entry name" value="Asp_tRNA_synth_type1"/>
    <property type="match status" value="1"/>
</dbReference>
<dbReference type="InterPro" id="IPR004364">
    <property type="entry name" value="Aa-tRNA-synt_II"/>
</dbReference>
<dbReference type="InterPro" id="IPR006195">
    <property type="entry name" value="aa-tRNA-synth_II"/>
</dbReference>
<dbReference type="InterPro" id="IPR045864">
    <property type="entry name" value="aa-tRNA-synth_II/BPL/LPL"/>
</dbReference>
<dbReference type="InterPro" id="IPR004524">
    <property type="entry name" value="Asp-tRNA-ligase_1"/>
</dbReference>
<dbReference type="InterPro" id="IPR047089">
    <property type="entry name" value="Asp-tRNA-ligase_1_N"/>
</dbReference>
<dbReference type="InterPro" id="IPR002312">
    <property type="entry name" value="Asp/Asn-tRNA-synth_IIb"/>
</dbReference>
<dbReference type="InterPro" id="IPR047090">
    <property type="entry name" value="AspRS_core"/>
</dbReference>
<dbReference type="InterPro" id="IPR004115">
    <property type="entry name" value="GAD-like_sf"/>
</dbReference>
<dbReference type="InterPro" id="IPR029351">
    <property type="entry name" value="GAD_dom"/>
</dbReference>
<dbReference type="InterPro" id="IPR012340">
    <property type="entry name" value="NA-bd_OB-fold"/>
</dbReference>
<dbReference type="InterPro" id="IPR004365">
    <property type="entry name" value="NA-bd_OB_tRNA"/>
</dbReference>
<dbReference type="NCBIfam" id="TIGR00459">
    <property type="entry name" value="aspS_bact"/>
    <property type="match status" value="1"/>
</dbReference>
<dbReference type="NCBIfam" id="NF001750">
    <property type="entry name" value="PRK00476.1"/>
    <property type="match status" value="1"/>
</dbReference>
<dbReference type="PANTHER" id="PTHR22594:SF5">
    <property type="entry name" value="ASPARTATE--TRNA LIGASE, MITOCHONDRIAL"/>
    <property type="match status" value="1"/>
</dbReference>
<dbReference type="PANTHER" id="PTHR22594">
    <property type="entry name" value="ASPARTYL/LYSYL-TRNA SYNTHETASE"/>
    <property type="match status" value="1"/>
</dbReference>
<dbReference type="Pfam" id="PF02938">
    <property type="entry name" value="GAD"/>
    <property type="match status" value="1"/>
</dbReference>
<dbReference type="Pfam" id="PF00152">
    <property type="entry name" value="tRNA-synt_2"/>
    <property type="match status" value="1"/>
</dbReference>
<dbReference type="Pfam" id="PF01336">
    <property type="entry name" value="tRNA_anti-codon"/>
    <property type="match status" value="1"/>
</dbReference>
<dbReference type="PRINTS" id="PR01042">
    <property type="entry name" value="TRNASYNTHASP"/>
</dbReference>
<dbReference type="SUPFAM" id="SSF55681">
    <property type="entry name" value="Class II aaRS and biotin synthetases"/>
    <property type="match status" value="1"/>
</dbReference>
<dbReference type="SUPFAM" id="SSF55261">
    <property type="entry name" value="GAD domain-like"/>
    <property type="match status" value="1"/>
</dbReference>
<dbReference type="SUPFAM" id="SSF50249">
    <property type="entry name" value="Nucleic acid-binding proteins"/>
    <property type="match status" value="1"/>
</dbReference>
<dbReference type="PROSITE" id="PS50862">
    <property type="entry name" value="AA_TRNA_LIGASE_II"/>
    <property type="match status" value="1"/>
</dbReference>
<reference key="1">
    <citation type="journal article" date="2002" name="Lancet">
        <title>Genome and virulence determinants of high virulence community-acquired MRSA.</title>
        <authorList>
            <person name="Baba T."/>
            <person name="Takeuchi F."/>
            <person name="Kuroda M."/>
            <person name="Yuzawa H."/>
            <person name="Aoki K."/>
            <person name="Oguchi A."/>
            <person name="Nagai Y."/>
            <person name="Iwama N."/>
            <person name="Asano K."/>
            <person name="Naimi T."/>
            <person name="Kuroda H."/>
            <person name="Cui L."/>
            <person name="Yamamoto K."/>
            <person name="Hiramatsu K."/>
        </authorList>
    </citation>
    <scope>NUCLEOTIDE SEQUENCE [LARGE SCALE GENOMIC DNA]</scope>
    <source>
        <strain>MW2</strain>
    </source>
</reference>
<gene>
    <name evidence="1" type="primary">aspS</name>
    <name type="ordered locus">MW1580</name>
</gene>
<protein>
    <recommendedName>
        <fullName evidence="1">Aspartate--tRNA ligase</fullName>
        <ecNumber evidence="1">6.1.1.12</ecNumber>
    </recommendedName>
    <alternativeName>
        <fullName evidence="1">Aspartyl-tRNA synthetase</fullName>
        <shortName evidence="1">AspRS</shortName>
    </alternativeName>
</protein>
<organism>
    <name type="scientific">Staphylococcus aureus (strain MW2)</name>
    <dbReference type="NCBI Taxonomy" id="196620"/>
    <lineage>
        <taxon>Bacteria</taxon>
        <taxon>Bacillati</taxon>
        <taxon>Bacillota</taxon>
        <taxon>Bacilli</taxon>
        <taxon>Bacillales</taxon>
        <taxon>Staphylococcaceae</taxon>
        <taxon>Staphylococcus</taxon>
    </lineage>
</organism>
<name>SYD_STAAW</name>
<accession>P67016</accession>
<accession>Q99TL9</accession>
<keyword id="KW-0030">Aminoacyl-tRNA synthetase</keyword>
<keyword id="KW-0067">ATP-binding</keyword>
<keyword id="KW-0963">Cytoplasm</keyword>
<keyword id="KW-0436">Ligase</keyword>
<keyword id="KW-0547">Nucleotide-binding</keyword>
<keyword id="KW-0648">Protein biosynthesis</keyword>
<sequence length="588" mass="66599">MSKRTTYCGLVTEAFLGQEITLKGWVNNRRDLGGLIFVDLRDREGIVQVVFNPAFSEEALKIAETVRSEYVVEVQGTVTKRDPETVNPKIKTGQVEVQVTNIKVINKSETPPFSINEENVNVDENIRLKYRYLDLRRQELAQTFKMRHQITRSIRQYLDDEGFFDIETPVLTKSTPEGARDYLVPSRVHDGEFYALPQSPQLFKQLLMISGFDKYYQIVKCFRDEDLRADRQPEFTQVDIEMSFVDQEDVMQMGEEMLKKVVKEVKGVEINGAFPRMTYKEAMRRYGSDKPDTRFEMELIDVSQLGRDMDFKVFKDTVENDGEIKAIVAKGAAEQYTRKDMDALTEFVNIYGAKGLAWVKVVEDGLTGPIGRFFETENVETLLTLTGAEAGDLVMFVADKPNVVAQSLGALRVKLAKELGLIDETKLNFLWVTDWPLLEYDEDAKRYVAAHHPFTSPKEADIAKLGTAPEEAEANAYDIVLNGYELGGGSIRIHDGELQEKMFEVLGFTKEQAQEQFGFLLDAFKYGAPPHGGIALGLDRLVMLLTNRTNLRDTIAFPKTASATCLLTNAPGEVSDKQLEELSLRIRH</sequence>